<protein>
    <recommendedName>
        <fullName evidence="1">Large ribosomal subunit protein bL12</fullName>
    </recommendedName>
    <alternativeName>
        <fullName evidence="2">50S ribosomal protein L7/L12</fullName>
    </alternativeName>
</protein>
<proteinExistence type="inferred from homology"/>
<dbReference type="EMBL" id="CP000084">
    <property type="protein sequence ID" value="AAZ21927.1"/>
    <property type="molecule type" value="Genomic_DNA"/>
</dbReference>
<dbReference type="RefSeq" id="WP_006996804.1">
    <property type="nucleotide sequence ID" value="NC_007205.1"/>
</dbReference>
<dbReference type="SMR" id="Q4FLL1"/>
<dbReference type="STRING" id="335992.SAR11_1124"/>
<dbReference type="GeneID" id="66295613"/>
<dbReference type="KEGG" id="pub:SAR11_1124"/>
<dbReference type="eggNOG" id="COG0222">
    <property type="taxonomic scope" value="Bacteria"/>
</dbReference>
<dbReference type="HOGENOM" id="CLU_086499_3_0_5"/>
<dbReference type="OrthoDB" id="9811748at2"/>
<dbReference type="Proteomes" id="UP000002528">
    <property type="component" value="Chromosome"/>
</dbReference>
<dbReference type="GO" id="GO:0022625">
    <property type="term" value="C:cytosolic large ribosomal subunit"/>
    <property type="evidence" value="ECO:0007669"/>
    <property type="project" value="TreeGrafter"/>
</dbReference>
<dbReference type="GO" id="GO:0003729">
    <property type="term" value="F:mRNA binding"/>
    <property type="evidence" value="ECO:0007669"/>
    <property type="project" value="TreeGrafter"/>
</dbReference>
<dbReference type="GO" id="GO:0003735">
    <property type="term" value="F:structural constituent of ribosome"/>
    <property type="evidence" value="ECO:0007669"/>
    <property type="project" value="InterPro"/>
</dbReference>
<dbReference type="GO" id="GO:0006412">
    <property type="term" value="P:translation"/>
    <property type="evidence" value="ECO:0007669"/>
    <property type="project" value="UniProtKB-UniRule"/>
</dbReference>
<dbReference type="CDD" id="cd00387">
    <property type="entry name" value="Ribosomal_L7_L12"/>
    <property type="match status" value="1"/>
</dbReference>
<dbReference type="FunFam" id="3.30.1390.10:FF:000001">
    <property type="entry name" value="50S ribosomal protein L7/L12"/>
    <property type="match status" value="1"/>
</dbReference>
<dbReference type="Gene3D" id="3.30.1390.10">
    <property type="match status" value="1"/>
</dbReference>
<dbReference type="Gene3D" id="1.20.5.710">
    <property type="entry name" value="Single helix bin"/>
    <property type="match status" value="1"/>
</dbReference>
<dbReference type="HAMAP" id="MF_00368">
    <property type="entry name" value="Ribosomal_bL12"/>
    <property type="match status" value="1"/>
</dbReference>
<dbReference type="InterPro" id="IPR000206">
    <property type="entry name" value="Ribosomal_bL12"/>
</dbReference>
<dbReference type="InterPro" id="IPR013823">
    <property type="entry name" value="Ribosomal_bL12_C"/>
</dbReference>
<dbReference type="InterPro" id="IPR014719">
    <property type="entry name" value="Ribosomal_bL12_C/ClpS-like"/>
</dbReference>
<dbReference type="InterPro" id="IPR008932">
    <property type="entry name" value="Ribosomal_bL12_oligo"/>
</dbReference>
<dbReference type="InterPro" id="IPR036235">
    <property type="entry name" value="Ribosomal_bL12_oligo_N_sf"/>
</dbReference>
<dbReference type="NCBIfam" id="TIGR00855">
    <property type="entry name" value="L12"/>
    <property type="match status" value="1"/>
</dbReference>
<dbReference type="PANTHER" id="PTHR45987">
    <property type="entry name" value="39S RIBOSOMAL PROTEIN L12"/>
    <property type="match status" value="1"/>
</dbReference>
<dbReference type="PANTHER" id="PTHR45987:SF4">
    <property type="entry name" value="LARGE RIBOSOMAL SUBUNIT PROTEIN BL12M"/>
    <property type="match status" value="1"/>
</dbReference>
<dbReference type="Pfam" id="PF00542">
    <property type="entry name" value="Ribosomal_L12"/>
    <property type="match status" value="1"/>
</dbReference>
<dbReference type="Pfam" id="PF16320">
    <property type="entry name" value="Ribosomal_L12_N"/>
    <property type="match status" value="1"/>
</dbReference>
<dbReference type="SUPFAM" id="SSF54736">
    <property type="entry name" value="ClpS-like"/>
    <property type="match status" value="1"/>
</dbReference>
<dbReference type="SUPFAM" id="SSF48300">
    <property type="entry name" value="Ribosomal protein L7/12, oligomerisation (N-terminal) domain"/>
    <property type="match status" value="1"/>
</dbReference>
<accession>Q4FLL1</accession>
<sequence length="121" mass="12603">MPDLNKIIEDLSSLTVVEAAELSKQLEEKWGVTAMAAAAPAAAAGGAAEEAKDDFTIMLISAGDKKINVIKEVRAATSLGLKEAKDLVEGAPKEVKSGVNKKDAEEIKAKLEAAGAKVELK</sequence>
<evidence type="ECO:0000255" key="1">
    <source>
        <dbReference type="HAMAP-Rule" id="MF_00368"/>
    </source>
</evidence>
<evidence type="ECO:0000305" key="2"/>
<gene>
    <name evidence="1" type="primary">rplL</name>
    <name type="ordered locus">SAR11_1124</name>
</gene>
<name>RL7_PELUB</name>
<comment type="function">
    <text evidence="1">Forms part of the ribosomal stalk which helps the ribosome interact with GTP-bound translation factors. Is thus essential for accurate translation.</text>
</comment>
<comment type="subunit">
    <text evidence="1">Homodimer. Part of the ribosomal stalk of the 50S ribosomal subunit. Forms a multimeric L10(L12)X complex, where L10 forms an elongated spine to which 2 to 4 L12 dimers bind in a sequential fashion. Binds GTP-bound translation factors.</text>
</comment>
<comment type="similarity">
    <text evidence="1">Belongs to the bacterial ribosomal protein bL12 family.</text>
</comment>
<keyword id="KW-1185">Reference proteome</keyword>
<keyword id="KW-0687">Ribonucleoprotein</keyword>
<keyword id="KW-0689">Ribosomal protein</keyword>
<feature type="chain" id="PRO_0000243459" description="Large ribosomal subunit protein bL12">
    <location>
        <begin position="1"/>
        <end position="121"/>
    </location>
</feature>
<reference key="1">
    <citation type="journal article" date="2005" name="Science">
        <title>Genome streamlining in a cosmopolitan oceanic bacterium.</title>
        <authorList>
            <person name="Giovannoni S.J."/>
            <person name="Tripp H.J."/>
            <person name="Givan S."/>
            <person name="Podar M."/>
            <person name="Vergin K.L."/>
            <person name="Baptista D."/>
            <person name="Bibbs L."/>
            <person name="Eads J."/>
            <person name="Richardson T.H."/>
            <person name="Noordewier M."/>
            <person name="Rappe M.S."/>
            <person name="Short J.M."/>
            <person name="Carrington J.C."/>
            <person name="Mathur E.J."/>
        </authorList>
    </citation>
    <scope>NUCLEOTIDE SEQUENCE [LARGE SCALE GENOMIC DNA]</scope>
    <source>
        <strain>HTCC1062</strain>
    </source>
</reference>
<organism>
    <name type="scientific">Pelagibacter ubique (strain HTCC1062)</name>
    <dbReference type="NCBI Taxonomy" id="335992"/>
    <lineage>
        <taxon>Bacteria</taxon>
        <taxon>Pseudomonadati</taxon>
        <taxon>Pseudomonadota</taxon>
        <taxon>Alphaproteobacteria</taxon>
        <taxon>Candidatus Pelagibacterales</taxon>
        <taxon>Candidatus Pelagibacteraceae</taxon>
        <taxon>Candidatus Pelagibacter</taxon>
    </lineage>
</organism>